<reference key="1">
    <citation type="journal article" date="2005" name="Proc. Natl. Acad. Sci. U.S.A.">
        <title>Whole genome sequence of Staphylococcus saprophyticus reveals the pathogenesis of uncomplicated urinary tract infection.</title>
        <authorList>
            <person name="Kuroda M."/>
            <person name="Yamashita A."/>
            <person name="Hirakawa H."/>
            <person name="Kumano M."/>
            <person name="Morikawa K."/>
            <person name="Higashide M."/>
            <person name="Maruyama A."/>
            <person name="Inose Y."/>
            <person name="Matoba K."/>
            <person name="Toh H."/>
            <person name="Kuhara S."/>
            <person name="Hattori M."/>
            <person name="Ohta T."/>
        </authorList>
    </citation>
    <scope>NUCLEOTIDE SEQUENCE [LARGE SCALE GENOMIC DNA]</scope>
    <source>
        <strain>ATCC 15305 / DSM 20229 / NCIMB 8711 / NCTC 7292 / S-41</strain>
    </source>
</reference>
<name>Y1024_STAS1</name>
<comment type="subcellular location">
    <subcellularLocation>
        <location evidence="3">Cell membrane</location>
        <topology evidence="3">Single-pass membrane protein</topology>
    </subcellularLocation>
</comment>
<comment type="similarity">
    <text evidence="3">Belongs to the UPF0478 family.</text>
</comment>
<gene>
    <name type="ordered locus">SSP1024</name>
</gene>
<dbReference type="EMBL" id="AP008934">
    <property type="protein sequence ID" value="BAE18169.1"/>
    <property type="molecule type" value="Genomic_DNA"/>
</dbReference>
<dbReference type="RefSeq" id="WP_011302871.1">
    <property type="nucleotide sequence ID" value="NZ_MTGA01000033.1"/>
</dbReference>
<dbReference type="SMR" id="Q49YH0"/>
<dbReference type="GeneID" id="3615718"/>
<dbReference type="KEGG" id="ssp:SSP1024"/>
<dbReference type="PATRIC" id="fig|342451.11.peg.1023"/>
<dbReference type="eggNOG" id="COG4768">
    <property type="taxonomic scope" value="Bacteria"/>
</dbReference>
<dbReference type="HOGENOM" id="CLU_115870_0_0_9"/>
<dbReference type="OrthoDB" id="2366030at2"/>
<dbReference type="Proteomes" id="UP000006371">
    <property type="component" value="Chromosome"/>
</dbReference>
<dbReference type="GO" id="GO:0005886">
    <property type="term" value="C:plasma membrane"/>
    <property type="evidence" value="ECO:0007669"/>
    <property type="project" value="UniProtKB-SubCell"/>
</dbReference>
<dbReference type="Gene3D" id="1.10.287.950">
    <property type="entry name" value="Methyl-accepting chemotaxis protein"/>
    <property type="match status" value="1"/>
</dbReference>
<dbReference type="InterPro" id="IPR009293">
    <property type="entry name" value="UPF0478"/>
</dbReference>
<dbReference type="PANTHER" id="PTHR40070">
    <property type="entry name" value="UPF0478 PROTEIN YTXG"/>
    <property type="match status" value="1"/>
</dbReference>
<dbReference type="PANTHER" id="PTHR40070:SF1">
    <property type="entry name" value="UPF0478 PROTEIN YTXG"/>
    <property type="match status" value="1"/>
</dbReference>
<dbReference type="Pfam" id="PF06103">
    <property type="entry name" value="DUF948"/>
    <property type="match status" value="1"/>
</dbReference>
<dbReference type="SUPFAM" id="SSF58104">
    <property type="entry name" value="Methyl-accepting chemotaxis protein (MCP) signaling domain"/>
    <property type="match status" value="1"/>
</dbReference>
<keyword id="KW-1003">Cell membrane</keyword>
<keyword id="KW-0472">Membrane</keyword>
<keyword id="KW-1185">Reference proteome</keyword>
<keyword id="KW-0812">Transmembrane</keyword>
<keyword id="KW-1133">Transmembrane helix</keyword>
<proteinExistence type="inferred from homology"/>
<sequence length="164" mass="18148">MEWILPIAGIIAAVAFLILVIGIVVVLLSVKKNLDHVAKTLDGVEGQVQGITRESTDLLHKANRLTEDIQDKSDRLNSVVDAVKGIGDSVQTLNGSVDRVTNSITHNISQNEDKISQVVQWSNVAMEVADKWQNRRNRRDSANYKTSSVANETNHSYTTRVDNK</sequence>
<evidence type="ECO:0000255" key="1"/>
<evidence type="ECO:0000256" key="2">
    <source>
        <dbReference type="SAM" id="MobiDB-lite"/>
    </source>
</evidence>
<evidence type="ECO:0000305" key="3"/>
<protein>
    <recommendedName>
        <fullName>UPF0478 protein SSP1024</fullName>
    </recommendedName>
</protein>
<accession>Q49YH0</accession>
<feature type="chain" id="PRO_0000299444" description="UPF0478 protein SSP1024">
    <location>
        <begin position="1"/>
        <end position="164"/>
    </location>
</feature>
<feature type="transmembrane region" description="Helical" evidence="1">
    <location>
        <begin position="7"/>
        <end position="27"/>
    </location>
</feature>
<feature type="region of interest" description="Disordered" evidence="2">
    <location>
        <begin position="136"/>
        <end position="164"/>
    </location>
</feature>
<feature type="compositionally biased region" description="Polar residues" evidence="2">
    <location>
        <begin position="143"/>
        <end position="164"/>
    </location>
</feature>
<organism>
    <name type="scientific">Staphylococcus saprophyticus subsp. saprophyticus (strain ATCC 15305 / DSM 20229 / NCIMB 8711 / NCTC 7292 / S-41)</name>
    <dbReference type="NCBI Taxonomy" id="342451"/>
    <lineage>
        <taxon>Bacteria</taxon>
        <taxon>Bacillati</taxon>
        <taxon>Bacillota</taxon>
        <taxon>Bacilli</taxon>
        <taxon>Bacillales</taxon>
        <taxon>Staphylococcaceae</taxon>
        <taxon>Staphylococcus</taxon>
    </lineage>
</organism>